<name>RPOE_STAA8</name>
<protein>
    <recommendedName>
        <fullName evidence="1">Probable DNA-directed RNA polymerase subunit delta</fullName>
    </recommendedName>
    <alternativeName>
        <fullName evidence="1">RNAP delta factor</fullName>
    </alternativeName>
</protein>
<gene>
    <name evidence="1" type="primary">rpoE</name>
    <name type="ordered locus">SAOUHSC_02369</name>
</gene>
<reference key="1">
    <citation type="book" date="2006" name="Gram positive pathogens, 2nd edition">
        <title>The Staphylococcus aureus NCTC 8325 genome.</title>
        <editorList>
            <person name="Fischetti V."/>
            <person name="Novick R."/>
            <person name="Ferretti J."/>
            <person name="Portnoy D."/>
            <person name="Rood J."/>
        </editorList>
        <authorList>
            <person name="Gillaspy A.F."/>
            <person name="Worrell V."/>
            <person name="Orvis J."/>
            <person name="Roe B.A."/>
            <person name="Dyer D.W."/>
            <person name="Iandolo J.J."/>
        </authorList>
    </citation>
    <scope>NUCLEOTIDE SEQUENCE [LARGE SCALE GENOMIC DNA]</scope>
    <source>
        <strain>NCTC 8325 / PS 47</strain>
    </source>
</reference>
<comment type="function">
    <text evidence="1">Participates in both the initiation and recycling phases of transcription. In the presence of the delta subunit, RNAP displays an increased specificity of transcription, a decreased affinity for nucleic acids, and an increased efficiency of RNA synthesis because of enhanced recycling.</text>
</comment>
<comment type="subunit">
    <text evidence="1">RNAP is composed of a core of 2 alpha, a beta and a beta' subunits. The core is associated with a delta subunit and one of several sigma factors.</text>
</comment>
<comment type="similarity">
    <text evidence="1">Belongs to the RpoE family.</text>
</comment>
<proteinExistence type="evidence at protein level"/>
<keyword id="KW-0002">3D-structure</keyword>
<keyword id="KW-0240">DNA-directed RNA polymerase</keyword>
<keyword id="KW-0548">Nucleotidyltransferase</keyword>
<keyword id="KW-1185">Reference proteome</keyword>
<keyword id="KW-0804">Transcription</keyword>
<keyword id="KW-0808">Transferase</keyword>
<evidence type="ECO:0000255" key="1">
    <source>
        <dbReference type="HAMAP-Rule" id="MF_00357"/>
    </source>
</evidence>
<evidence type="ECO:0000255" key="2">
    <source>
        <dbReference type="PROSITE-ProRule" id="PRU01261"/>
    </source>
</evidence>
<evidence type="ECO:0000256" key="3">
    <source>
        <dbReference type="SAM" id="MobiDB-lite"/>
    </source>
</evidence>
<evidence type="ECO:0007829" key="4">
    <source>
        <dbReference type="PDB" id="8X6G"/>
    </source>
</evidence>
<sequence>MKIQDYTKQMVDEKSFIDMAYTLLNDKGETMNLYDIIDEFRALGDYEYEEIENRVVQFYTDLNTDGRFLNVGENLWGLRDWYSVDDIEEKIAPTIQKFDILDADDEEDQNLKLLGEDEMDDDDDIPAQTDDQEELNDPEDEQVEEEINHSDIVIEEDEDELDEDEEVFEDEEDFND</sequence>
<organism>
    <name type="scientific">Staphylococcus aureus (strain NCTC 8325 / PS 47)</name>
    <dbReference type="NCBI Taxonomy" id="93061"/>
    <lineage>
        <taxon>Bacteria</taxon>
        <taxon>Bacillati</taxon>
        <taxon>Bacillota</taxon>
        <taxon>Bacilli</taxon>
        <taxon>Bacillales</taxon>
        <taxon>Staphylococcaceae</taxon>
        <taxon>Staphylococcus</taxon>
    </lineage>
</organism>
<dbReference type="EMBL" id="CP000253">
    <property type="protein sequence ID" value="ABD31400.1"/>
    <property type="molecule type" value="Genomic_DNA"/>
</dbReference>
<dbReference type="RefSeq" id="WP_000701483.1">
    <property type="nucleotide sequence ID" value="NZ_LS483365.1"/>
</dbReference>
<dbReference type="RefSeq" id="YP_500845.1">
    <property type="nucleotide sequence ID" value="NC_007795.1"/>
</dbReference>
<dbReference type="PDB" id="8X6G">
    <property type="method" value="EM"/>
    <property type="resolution" value="3.30 A"/>
    <property type="chains" value="E=1-176"/>
</dbReference>
<dbReference type="PDBsum" id="8X6G"/>
<dbReference type="SMR" id="Q2FWD0"/>
<dbReference type="STRING" id="93061.SAOUHSC_02369"/>
<dbReference type="PaxDb" id="1280-SAXN108_2373"/>
<dbReference type="GeneID" id="3919412"/>
<dbReference type="GeneID" id="98346435"/>
<dbReference type="KEGG" id="sao:SAOUHSC_02369"/>
<dbReference type="PATRIC" id="fig|93061.5.peg.2146"/>
<dbReference type="eggNOG" id="COG3343">
    <property type="taxonomic scope" value="Bacteria"/>
</dbReference>
<dbReference type="HOGENOM" id="CLU_116648_1_0_9"/>
<dbReference type="OrthoDB" id="401223at2"/>
<dbReference type="PRO" id="PR:Q2FWD0"/>
<dbReference type="Proteomes" id="UP000008816">
    <property type="component" value="Chromosome"/>
</dbReference>
<dbReference type="GO" id="GO:0000428">
    <property type="term" value="C:DNA-directed RNA polymerase complex"/>
    <property type="evidence" value="ECO:0007669"/>
    <property type="project" value="UniProtKB-KW"/>
</dbReference>
<dbReference type="GO" id="GO:0003899">
    <property type="term" value="F:DNA-directed RNA polymerase activity"/>
    <property type="evidence" value="ECO:0007669"/>
    <property type="project" value="UniProtKB-UniRule"/>
</dbReference>
<dbReference type="GO" id="GO:0006351">
    <property type="term" value="P:DNA-templated transcription"/>
    <property type="evidence" value="ECO:0007669"/>
    <property type="project" value="InterPro"/>
</dbReference>
<dbReference type="GO" id="GO:0006355">
    <property type="term" value="P:regulation of DNA-templated transcription"/>
    <property type="evidence" value="ECO:0007669"/>
    <property type="project" value="UniProtKB-UniRule"/>
</dbReference>
<dbReference type="Gene3D" id="1.10.10.1250">
    <property type="entry name" value="RNA polymerase, subunit delta, N-terminal domain"/>
    <property type="match status" value="1"/>
</dbReference>
<dbReference type="HAMAP" id="MF_00357">
    <property type="entry name" value="RNApol_bact_RpoE"/>
    <property type="match status" value="1"/>
</dbReference>
<dbReference type="InterPro" id="IPR007759">
    <property type="entry name" value="Asxl_HARE-HTH"/>
</dbReference>
<dbReference type="InterPro" id="IPR038087">
    <property type="entry name" value="RNAP_delta_N_dom_sf"/>
</dbReference>
<dbReference type="InterPro" id="IPR029757">
    <property type="entry name" value="RpoE"/>
</dbReference>
<dbReference type="NCBIfam" id="TIGR04567">
    <property type="entry name" value="RNAP_delt_lowGC"/>
    <property type="match status" value="1"/>
</dbReference>
<dbReference type="Pfam" id="PF05066">
    <property type="entry name" value="HARE-HTH"/>
    <property type="match status" value="1"/>
</dbReference>
<dbReference type="PROSITE" id="PS51913">
    <property type="entry name" value="HTH_HARE"/>
    <property type="match status" value="1"/>
</dbReference>
<feature type="chain" id="PRO_0000303138" description="Probable DNA-directed RNA polymerase subunit delta">
    <location>
        <begin position="1"/>
        <end position="176"/>
    </location>
</feature>
<feature type="domain" description="HTH HARE-type" evidence="2">
    <location>
        <begin position="14"/>
        <end position="81"/>
    </location>
</feature>
<feature type="region of interest" description="Disordered" evidence="3">
    <location>
        <begin position="114"/>
        <end position="176"/>
    </location>
</feature>
<feature type="compositionally biased region" description="Acidic residues" evidence="3">
    <location>
        <begin position="116"/>
        <end position="145"/>
    </location>
</feature>
<feature type="compositionally biased region" description="Acidic residues" evidence="3">
    <location>
        <begin position="153"/>
        <end position="176"/>
    </location>
</feature>
<feature type="helix" evidence="4">
    <location>
        <begin position="9"/>
        <end position="13"/>
    </location>
</feature>
<feature type="helix" evidence="4">
    <location>
        <begin position="16"/>
        <end position="27"/>
    </location>
</feature>
<feature type="helix" evidence="4">
    <location>
        <begin position="33"/>
        <end position="44"/>
    </location>
</feature>
<feature type="helix" evidence="4">
    <location>
        <begin position="48"/>
        <end position="64"/>
    </location>
</feature>
<feature type="strand" evidence="4">
    <location>
        <begin position="68"/>
        <end position="72"/>
    </location>
</feature>
<feature type="strand" evidence="4">
    <location>
        <begin position="75"/>
        <end position="78"/>
    </location>
</feature>
<feature type="helix" evidence="4">
    <location>
        <begin position="79"/>
        <end position="81"/>
    </location>
</feature>
<feature type="helix" evidence="4">
    <location>
        <begin position="84"/>
        <end position="90"/>
    </location>
</feature>
<accession>Q2FWD0</accession>